<protein>
    <recommendedName>
        <fullName evidence="1">cGMP-dependent 3',5'-cyclic phosphodiesterase</fullName>
        <ecNumber evidence="1">3.1.4.17</ecNumber>
    </recommendedName>
    <alternativeName>
        <fullName evidence="9">Cyclic GMP-stimulated phosphodiesterase</fullName>
        <shortName evidence="9">CGS-PDE</shortName>
        <shortName evidence="9">cGSPDE</shortName>
    </alternativeName>
</protein>
<evidence type="ECO:0000250" key="1">
    <source>
        <dbReference type="UniProtKB" id="O00408"/>
    </source>
</evidence>
<evidence type="ECO:0000250" key="2">
    <source>
        <dbReference type="UniProtKB" id="O76083"/>
    </source>
</evidence>
<evidence type="ECO:0000250" key="3">
    <source>
        <dbReference type="UniProtKB" id="Q922S4"/>
    </source>
</evidence>
<evidence type="ECO:0000255" key="4"/>
<evidence type="ECO:0000255" key="5">
    <source>
        <dbReference type="PROSITE-ProRule" id="PRU01192"/>
    </source>
</evidence>
<evidence type="ECO:0000256" key="6">
    <source>
        <dbReference type="SAM" id="MobiDB-lite"/>
    </source>
</evidence>
<evidence type="ECO:0000269" key="7">
    <source>
    </source>
</evidence>
<evidence type="ECO:0000269" key="8">
    <source>
    </source>
</evidence>
<evidence type="ECO:0000303" key="9">
    <source>
    </source>
</evidence>
<evidence type="ECO:0000305" key="10"/>
<evidence type="ECO:0000312" key="11">
    <source>
        <dbReference type="RGD" id="620965"/>
    </source>
</evidence>
<evidence type="ECO:0007744" key="12">
    <source>
    </source>
</evidence>
<organism>
    <name type="scientific">Rattus norvegicus</name>
    <name type="common">Rat</name>
    <dbReference type="NCBI Taxonomy" id="10116"/>
    <lineage>
        <taxon>Eukaryota</taxon>
        <taxon>Metazoa</taxon>
        <taxon>Chordata</taxon>
        <taxon>Craniata</taxon>
        <taxon>Vertebrata</taxon>
        <taxon>Euteleostomi</taxon>
        <taxon>Mammalia</taxon>
        <taxon>Eutheria</taxon>
        <taxon>Euarchontoglires</taxon>
        <taxon>Glires</taxon>
        <taxon>Rodentia</taxon>
        <taxon>Myomorpha</taxon>
        <taxon>Muroidea</taxon>
        <taxon>Muridae</taxon>
        <taxon>Murinae</taxon>
        <taxon>Rattus</taxon>
    </lineage>
</organism>
<keyword id="KW-0025">Alternative splicing</keyword>
<keyword id="KW-0114">cAMP</keyword>
<keyword id="KW-1003">Cell membrane</keyword>
<keyword id="KW-0140">cGMP</keyword>
<keyword id="KW-0142">cGMP-binding</keyword>
<keyword id="KW-0963">Cytoplasm</keyword>
<keyword id="KW-0378">Hydrolase</keyword>
<keyword id="KW-0460">Magnesium</keyword>
<keyword id="KW-0472">Membrane</keyword>
<keyword id="KW-0479">Metal-binding</keyword>
<keyword id="KW-0496">Mitochondrion</keyword>
<keyword id="KW-0999">Mitochondrion inner membrane</keyword>
<keyword id="KW-1000">Mitochondrion outer membrane</keyword>
<keyword id="KW-0547">Nucleotide-binding</keyword>
<keyword id="KW-0597">Phosphoprotein</keyword>
<keyword id="KW-1185">Reference proteome</keyword>
<keyword id="KW-0677">Repeat</keyword>
<keyword id="KW-0862">Zinc</keyword>
<accession>Q01062</accession>
<dbReference type="EC" id="3.1.4.17" evidence="1"/>
<dbReference type="EMBL" id="U21101">
    <property type="protein sequence ID" value="AAA63683.1"/>
    <property type="molecule type" value="mRNA"/>
</dbReference>
<dbReference type="EMBL" id="M94540">
    <property type="protein sequence ID" value="AAA40922.1"/>
    <property type="molecule type" value="mRNA"/>
</dbReference>
<dbReference type="PIR" id="JC2486">
    <property type="entry name" value="JC2486"/>
</dbReference>
<dbReference type="RefSeq" id="NP_001137319.1">
    <property type="nucleotide sequence ID" value="NM_001143847.1"/>
</dbReference>
<dbReference type="RefSeq" id="NP_112341.1">
    <molecule id="Q01062-1"/>
    <property type="nucleotide sequence ID" value="NM_031079.2"/>
</dbReference>
<dbReference type="SMR" id="Q01062"/>
<dbReference type="BioGRID" id="249615">
    <property type="interactions" value="4"/>
</dbReference>
<dbReference type="FunCoup" id="Q01062">
    <property type="interactions" value="1016"/>
</dbReference>
<dbReference type="IntAct" id="Q01062">
    <property type="interactions" value="1"/>
</dbReference>
<dbReference type="STRING" id="10116.ENSRNOP00000026586"/>
<dbReference type="BindingDB" id="Q01062"/>
<dbReference type="ChEMBL" id="CHEMBL4650"/>
<dbReference type="DrugCentral" id="Q01062"/>
<dbReference type="iPTMnet" id="Q01062"/>
<dbReference type="PhosphoSitePlus" id="Q01062"/>
<dbReference type="SwissPalm" id="Q01062"/>
<dbReference type="PaxDb" id="10116-ENSRNOP00000026586"/>
<dbReference type="GeneID" id="81743"/>
<dbReference type="KEGG" id="rno:81743"/>
<dbReference type="UCSC" id="RGD:620965">
    <molecule id="Q01062-1"/>
    <property type="organism name" value="rat"/>
</dbReference>
<dbReference type="AGR" id="RGD:620965"/>
<dbReference type="CTD" id="5138"/>
<dbReference type="RGD" id="620965">
    <property type="gene designation" value="Pde2a"/>
</dbReference>
<dbReference type="eggNOG" id="KOG3689">
    <property type="taxonomic scope" value="Eukaryota"/>
</dbReference>
<dbReference type="InParanoid" id="Q01062"/>
<dbReference type="OrthoDB" id="35635at9989"/>
<dbReference type="PhylomeDB" id="Q01062"/>
<dbReference type="BRENDA" id="3.1.4.17">
    <property type="organism ID" value="5301"/>
</dbReference>
<dbReference type="Reactome" id="R-RNO-418457">
    <property type="pathway name" value="cGMP effects"/>
</dbReference>
<dbReference type="Reactome" id="R-RNO-418555">
    <property type="pathway name" value="G alpha (s) signalling events"/>
</dbReference>
<dbReference type="SABIO-RK" id="Q01062"/>
<dbReference type="PRO" id="PR:Q01062"/>
<dbReference type="Proteomes" id="UP000002494">
    <property type="component" value="Unplaced"/>
</dbReference>
<dbReference type="GO" id="GO:0030424">
    <property type="term" value="C:axon"/>
    <property type="evidence" value="ECO:0000266"/>
    <property type="project" value="RGD"/>
</dbReference>
<dbReference type="GO" id="GO:0005737">
    <property type="term" value="C:cytoplasm"/>
    <property type="evidence" value="ECO:0000314"/>
    <property type="project" value="UniProtKB"/>
</dbReference>
<dbReference type="GO" id="GO:0005829">
    <property type="term" value="C:cytosol"/>
    <property type="evidence" value="ECO:0000250"/>
    <property type="project" value="UniProtKB"/>
</dbReference>
<dbReference type="GO" id="GO:0030425">
    <property type="term" value="C:dendrite"/>
    <property type="evidence" value="ECO:0000266"/>
    <property type="project" value="RGD"/>
</dbReference>
<dbReference type="GO" id="GO:0005783">
    <property type="term" value="C:endoplasmic reticulum"/>
    <property type="evidence" value="ECO:0000250"/>
    <property type="project" value="UniProtKB"/>
</dbReference>
<dbReference type="GO" id="GO:0005794">
    <property type="term" value="C:Golgi apparatus"/>
    <property type="evidence" value="ECO:0000250"/>
    <property type="project" value="UniProtKB"/>
</dbReference>
<dbReference type="GO" id="GO:0097457">
    <property type="term" value="C:hippocampal mossy fiber"/>
    <property type="evidence" value="ECO:0000314"/>
    <property type="project" value="RGD"/>
</dbReference>
<dbReference type="GO" id="GO:0005743">
    <property type="term" value="C:mitochondrial inner membrane"/>
    <property type="evidence" value="ECO:0000314"/>
    <property type="project" value="UniProtKB"/>
</dbReference>
<dbReference type="GO" id="GO:0005759">
    <property type="term" value="C:mitochondrial matrix"/>
    <property type="evidence" value="ECO:0000314"/>
    <property type="project" value="UniProtKB"/>
</dbReference>
<dbReference type="GO" id="GO:0005741">
    <property type="term" value="C:mitochondrial outer membrane"/>
    <property type="evidence" value="ECO:0000314"/>
    <property type="project" value="UniProtKB"/>
</dbReference>
<dbReference type="GO" id="GO:0005739">
    <property type="term" value="C:mitochondrion"/>
    <property type="evidence" value="ECO:0000314"/>
    <property type="project" value="UniProtKB"/>
</dbReference>
<dbReference type="GO" id="GO:0005634">
    <property type="term" value="C:nucleus"/>
    <property type="evidence" value="ECO:0000250"/>
    <property type="project" value="UniProtKB"/>
</dbReference>
<dbReference type="GO" id="GO:0048471">
    <property type="term" value="C:perinuclear region of cytoplasm"/>
    <property type="evidence" value="ECO:0000250"/>
    <property type="project" value="UniProtKB"/>
</dbReference>
<dbReference type="GO" id="GO:0005886">
    <property type="term" value="C:plasma membrane"/>
    <property type="evidence" value="ECO:0000314"/>
    <property type="project" value="UniProtKB"/>
</dbReference>
<dbReference type="GO" id="GO:0042734">
    <property type="term" value="C:presynaptic membrane"/>
    <property type="evidence" value="ECO:0000250"/>
    <property type="project" value="UniProtKB"/>
</dbReference>
<dbReference type="GO" id="GO:0097060">
    <property type="term" value="C:synaptic membrane"/>
    <property type="evidence" value="ECO:0000314"/>
    <property type="project" value="RGD"/>
</dbReference>
<dbReference type="GO" id="GO:0004118">
    <property type="term" value="F:3',5'-cGMP-stimulated cyclic-nucleotide phosphodiesterase activity"/>
    <property type="evidence" value="ECO:0000266"/>
    <property type="project" value="RGD"/>
</dbReference>
<dbReference type="GO" id="GO:0004115">
    <property type="term" value="F:3',5'-cyclic-AMP phosphodiesterase activity"/>
    <property type="evidence" value="ECO:0000250"/>
    <property type="project" value="UniProtKB"/>
</dbReference>
<dbReference type="GO" id="GO:0047555">
    <property type="term" value="F:3',5'-cyclic-GMP phosphodiesterase activity"/>
    <property type="evidence" value="ECO:0000266"/>
    <property type="project" value="RGD"/>
</dbReference>
<dbReference type="GO" id="GO:0030552">
    <property type="term" value="F:cAMP binding"/>
    <property type="evidence" value="ECO:0000266"/>
    <property type="project" value="RGD"/>
</dbReference>
<dbReference type="GO" id="GO:0030553">
    <property type="term" value="F:cGMP binding"/>
    <property type="evidence" value="ECO:0000266"/>
    <property type="project" value="RGD"/>
</dbReference>
<dbReference type="GO" id="GO:0036004">
    <property type="term" value="F:GAF domain binding"/>
    <property type="evidence" value="ECO:0000266"/>
    <property type="project" value="RGD"/>
</dbReference>
<dbReference type="GO" id="GO:0042802">
    <property type="term" value="F:identical protein binding"/>
    <property type="evidence" value="ECO:0000353"/>
    <property type="project" value="RGD"/>
</dbReference>
<dbReference type="GO" id="GO:0000287">
    <property type="term" value="F:magnesium ion binding"/>
    <property type="evidence" value="ECO:0000266"/>
    <property type="project" value="RGD"/>
</dbReference>
<dbReference type="GO" id="GO:0042301">
    <property type="term" value="F:phosphate ion binding"/>
    <property type="evidence" value="ECO:0000266"/>
    <property type="project" value="RGD"/>
</dbReference>
<dbReference type="GO" id="GO:0042803">
    <property type="term" value="F:protein homodimerization activity"/>
    <property type="evidence" value="ECO:0000266"/>
    <property type="project" value="RGD"/>
</dbReference>
<dbReference type="GO" id="GO:0030911">
    <property type="term" value="F:TPR domain binding"/>
    <property type="evidence" value="ECO:0000266"/>
    <property type="project" value="RGD"/>
</dbReference>
<dbReference type="GO" id="GO:0008270">
    <property type="term" value="F:zinc ion binding"/>
    <property type="evidence" value="ECO:0000266"/>
    <property type="project" value="RGD"/>
</dbReference>
<dbReference type="GO" id="GO:0007193">
    <property type="term" value="P:adenylate cyclase-inhibiting G protein-coupled receptor signaling pathway"/>
    <property type="evidence" value="ECO:0000266"/>
    <property type="project" value="RGD"/>
</dbReference>
<dbReference type="GO" id="GO:0035904">
    <property type="term" value="P:aorta development"/>
    <property type="evidence" value="ECO:0000266"/>
    <property type="project" value="RGD"/>
</dbReference>
<dbReference type="GO" id="GO:0019933">
    <property type="term" value="P:cAMP-mediated signaling"/>
    <property type="evidence" value="ECO:0000318"/>
    <property type="project" value="GO_Central"/>
</dbReference>
<dbReference type="GO" id="GO:0003279">
    <property type="term" value="P:cardiac septum development"/>
    <property type="evidence" value="ECO:0000266"/>
    <property type="project" value="RGD"/>
</dbReference>
<dbReference type="GO" id="GO:1904613">
    <property type="term" value="P:cellular response to 2,3,7,8-tetrachlorodibenzodioxine"/>
    <property type="evidence" value="ECO:0000266"/>
    <property type="project" value="RGD"/>
</dbReference>
<dbReference type="GO" id="GO:0071320">
    <property type="term" value="P:cellular response to cAMP"/>
    <property type="evidence" value="ECO:0000266"/>
    <property type="project" value="RGD"/>
</dbReference>
<dbReference type="GO" id="GO:0071321">
    <property type="term" value="P:cellular response to cGMP"/>
    <property type="evidence" value="ECO:0000250"/>
    <property type="project" value="UniProtKB"/>
</dbReference>
<dbReference type="GO" id="GO:0097011">
    <property type="term" value="P:cellular response to granulocyte macrophage colony-stimulating factor stimulus"/>
    <property type="evidence" value="ECO:0000250"/>
    <property type="project" value="UniProtKB"/>
</dbReference>
<dbReference type="GO" id="GO:0071222">
    <property type="term" value="P:cellular response to lipopolysaccharide"/>
    <property type="evidence" value="ECO:0000266"/>
    <property type="project" value="RGD"/>
</dbReference>
<dbReference type="GO" id="GO:0036006">
    <property type="term" value="P:cellular response to macrophage colony-stimulating factor stimulus"/>
    <property type="evidence" value="ECO:0000250"/>
    <property type="project" value="UniProtKB"/>
</dbReference>
<dbReference type="GO" id="GO:0071260">
    <property type="term" value="P:cellular response to mechanical stimulus"/>
    <property type="evidence" value="ECO:0000250"/>
    <property type="project" value="UniProtKB"/>
</dbReference>
<dbReference type="GO" id="GO:0071560">
    <property type="term" value="P:cellular response to transforming growth factor beta stimulus"/>
    <property type="evidence" value="ECO:0000266"/>
    <property type="project" value="RGD"/>
</dbReference>
<dbReference type="GO" id="GO:0046069">
    <property type="term" value="P:cGMP catabolic process"/>
    <property type="evidence" value="ECO:0000266"/>
    <property type="project" value="RGD"/>
</dbReference>
<dbReference type="GO" id="GO:0019934">
    <property type="term" value="P:cGMP-mediated signaling"/>
    <property type="evidence" value="ECO:0000250"/>
    <property type="project" value="UniProtKB"/>
</dbReference>
<dbReference type="GO" id="GO:0060976">
    <property type="term" value="P:coronary vasculature development"/>
    <property type="evidence" value="ECO:0000266"/>
    <property type="project" value="RGD"/>
</dbReference>
<dbReference type="GO" id="GO:0061028">
    <property type="term" value="P:establishment of endothelial barrier"/>
    <property type="evidence" value="ECO:0000314"/>
    <property type="project" value="UniProtKB"/>
</dbReference>
<dbReference type="GO" id="GO:0007507">
    <property type="term" value="P:heart development"/>
    <property type="evidence" value="ECO:0000266"/>
    <property type="project" value="RGD"/>
</dbReference>
<dbReference type="GO" id="GO:0003170">
    <property type="term" value="P:heart valve development"/>
    <property type="evidence" value="ECO:0000266"/>
    <property type="project" value="RGD"/>
</dbReference>
<dbReference type="GO" id="GO:0035556">
    <property type="term" value="P:intracellular signal transduction"/>
    <property type="evidence" value="ECO:0000315"/>
    <property type="project" value="UniProtKB"/>
</dbReference>
<dbReference type="GO" id="GO:0106072">
    <property type="term" value="P:negative regulation of adenylate cyclase-activating G protein-coupled receptor signaling pathway"/>
    <property type="evidence" value="ECO:0000266"/>
    <property type="project" value="RGD"/>
</dbReference>
<dbReference type="GO" id="GO:0141162">
    <property type="term" value="P:negative regulation of cAMP/PKA signal transduction"/>
    <property type="evidence" value="ECO:0000314"/>
    <property type="project" value="RGD"/>
</dbReference>
<dbReference type="GO" id="GO:0010754">
    <property type="term" value="P:negative regulation of cGMP-mediated signaling"/>
    <property type="evidence" value="ECO:0000318"/>
    <property type="project" value="GO_Central"/>
</dbReference>
<dbReference type="GO" id="GO:0000122">
    <property type="term" value="P:negative regulation of transcription by RNA polymerase II"/>
    <property type="evidence" value="ECO:0000250"/>
    <property type="project" value="UniProtKB"/>
</dbReference>
<dbReference type="GO" id="GO:0043116">
    <property type="term" value="P:negative regulation of vascular permeability"/>
    <property type="evidence" value="ECO:0000250"/>
    <property type="project" value="UniProtKB"/>
</dbReference>
<dbReference type="GO" id="GO:0010628">
    <property type="term" value="P:positive regulation of gene expression"/>
    <property type="evidence" value="ECO:0000266"/>
    <property type="project" value="RGD"/>
</dbReference>
<dbReference type="GO" id="GO:0050729">
    <property type="term" value="P:positive regulation of inflammatory response"/>
    <property type="evidence" value="ECO:0000250"/>
    <property type="project" value="UniProtKB"/>
</dbReference>
<dbReference type="GO" id="GO:0043117">
    <property type="term" value="P:positive regulation of vascular permeability"/>
    <property type="evidence" value="ECO:0000250"/>
    <property type="project" value="UniProtKB"/>
</dbReference>
<dbReference type="GO" id="GO:0010752">
    <property type="term" value="P:regulation of cGMP-mediated signaling"/>
    <property type="evidence" value="ECO:0000266"/>
    <property type="project" value="RGD"/>
</dbReference>
<dbReference type="GO" id="GO:0010821">
    <property type="term" value="P:regulation of mitochondrion organization"/>
    <property type="evidence" value="ECO:0000315"/>
    <property type="project" value="UniProtKB"/>
</dbReference>
<dbReference type="GO" id="GO:0010749">
    <property type="term" value="P:regulation of nitric oxide mediated signal transduction"/>
    <property type="evidence" value="ECO:0000266"/>
    <property type="project" value="RGD"/>
</dbReference>
<dbReference type="GO" id="GO:1904880">
    <property type="term" value="P:response to hydrogen sulfide"/>
    <property type="evidence" value="ECO:0000270"/>
    <property type="project" value="RGD"/>
</dbReference>
<dbReference type="GO" id="GO:0003281">
    <property type="term" value="P:ventricular septum development"/>
    <property type="evidence" value="ECO:0000266"/>
    <property type="project" value="RGD"/>
</dbReference>
<dbReference type="CDD" id="cd00077">
    <property type="entry name" value="HDc"/>
    <property type="match status" value="1"/>
</dbReference>
<dbReference type="FunFam" id="1.10.1300.10:FF:000009">
    <property type="entry name" value="Phosphodiesterase"/>
    <property type="match status" value="1"/>
</dbReference>
<dbReference type="FunFam" id="3.30.450.40:FF:000007">
    <property type="entry name" value="Phosphodiesterase"/>
    <property type="match status" value="1"/>
</dbReference>
<dbReference type="FunFam" id="3.30.450.40:FF:000014">
    <property type="entry name" value="Phosphodiesterase"/>
    <property type="match status" value="1"/>
</dbReference>
<dbReference type="Gene3D" id="3.30.450.40">
    <property type="match status" value="2"/>
</dbReference>
<dbReference type="Gene3D" id="1.10.1300.10">
    <property type="entry name" value="3'5'-cyclic nucleotide phosphodiesterase, catalytic domain"/>
    <property type="match status" value="1"/>
</dbReference>
<dbReference type="InterPro" id="IPR003018">
    <property type="entry name" value="GAF"/>
</dbReference>
<dbReference type="InterPro" id="IPR029016">
    <property type="entry name" value="GAF-like_dom_sf"/>
</dbReference>
<dbReference type="InterPro" id="IPR003607">
    <property type="entry name" value="HD/PDEase_dom"/>
</dbReference>
<dbReference type="InterPro" id="IPR023088">
    <property type="entry name" value="PDEase"/>
</dbReference>
<dbReference type="InterPro" id="IPR002073">
    <property type="entry name" value="PDEase_catalytic_dom"/>
</dbReference>
<dbReference type="InterPro" id="IPR036971">
    <property type="entry name" value="PDEase_catalytic_dom_sf"/>
</dbReference>
<dbReference type="InterPro" id="IPR023174">
    <property type="entry name" value="PDEase_CS"/>
</dbReference>
<dbReference type="PANTHER" id="PTHR11347">
    <property type="entry name" value="CYCLIC NUCLEOTIDE PHOSPHODIESTERASE"/>
    <property type="match status" value="1"/>
</dbReference>
<dbReference type="Pfam" id="PF01590">
    <property type="entry name" value="GAF"/>
    <property type="match status" value="1"/>
</dbReference>
<dbReference type="Pfam" id="PF13185">
    <property type="entry name" value="GAF_2"/>
    <property type="match status" value="1"/>
</dbReference>
<dbReference type="Pfam" id="PF00233">
    <property type="entry name" value="PDEase_I"/>
    <property type="match status" value="1"/>
</dbReference>
<dbReference type="PRINTS" id="PR00387">
    <property type="entry name" value="PDIESTERASE1"/>
</dbReference>
<dbReference type="SMART" id="SM00065">
    <property type="entry name" value="GAF"/>
    <property type="match status" value="3"/>
</dbReference>
<dbReference type="SMART" id="SM00471">
    <property type="entry name" value="HDc"/>
    <property type="match status" value="1"/>
</dbReference>
<dbReference type="SUPFAM" id="SSF55781">
    <property type="entry name" value="GAF domain-like"/>
    <property type="match status" value="3"/>
</dbReference>
<dbReference type="SUPFAM" id="SSF109604">
    <property type="entry name" value="HD-domain/PDEase-like"/>
    <property type="match status" value="1"/>
</dbReference>
<dbReference type="PROSITE" id="PS00126">
    <property type="entry name" value="PDEASE_I_1"/>
    <property type="match status" value="1"/>
</dbReference>
<dbReference type="PROSITE" id="PS51845">
    <property type="entry name" value="PDEASE_I_2"/>
    <property type="match status" value="1"/>
</dbReference>
<reference key="1">
    <citation type="journal article" date="1994" name="Biochem. Biophys. Res. Commun.">
        <title>A novel cyclic GMP stimulated phosphodiesterase from rat brain.</title>
        <authorList>
            <person name="Yang Q."/>
            <person name="Paskind M."/>
            <person name="Bolger G."/>
            <person name="Thompson W.J."/>
            <person name="Repaske D.R."/>
            <person name="Cutler L.S."/>
            <person name="Epstein P.M."/>
        </authorList>
    </citation>
    <scope>NUCLEOTIDE SEQUENCE [MRNA]</scope>
    <source>
        <strain>Sprague-Dawley</strain>
        <tissue>Brain</tissue>
    </source>
</reference>
<reference key="2">
    <citation type="journal article" date="1992" name="J. Biol. Chem.">
        <title>A polymerase chain reaction strategy to identify and clone cyclic nucleotide phosphodiesterase cDNAs. Molecular cloning of the cDNA encoding the 63-kDa calmodulin-dependent phosphodiesterase.</title>
        <authorList>
            <person name="Repaske D.R."/>
            <person name="Swinnen J.V."/>
            <person name="Jin S.-L.C."/>
            <person name="van Wyk J.J."/>
            <person name="Conti M."/>
        </authorList>
    </citation>
    <scope>NUCLEOTIDE SEQUENCE [MRNA] OF 643-759</scope>
</reference>
<reference key="3">
    <citation type="journal article" date="2011" name="J. Biol. Chem.">
        <title>A phosphodiesterase 2A isoform localized to mitochondria regulates respiration.</title>
        <authorList>
            <person name="Acin-Perez R."/>
            <person name="Russwurm M."/>
            <person name="Gunnewig K."/>
            <person name="Gertz M."/>
            <person name="Zoidl G."/>
            <person name="Ramos L."/>
            <person name="Buck J."/>
            <person name="Levin L.R."/>
            <person name="Rassow J."/>
            <person name="Manfredi G."/>
            <person name="Steegborn C."/>
        </authorList>
    </citation>
    <scope>SUBCELLULAR LOCATION (ISOFORM PDE2A2)</scope>
    <scope>TISSUE SPECIFICITY</scope>
</reference>
<reference key="4">
    <citation type="journal article" date="2012" name="Nat. Commun.">
        <title>Quantitative maps of protein phosphorylation sites across 14 different rat organs and tissues.</title>
        <authorList>
            <person name="Lundby A."/>
            <person name="Secher A."/>
            <person name="Lage K."/>
            <person name="Nordsborg N.B."/>
            <person name="Dmytriyev A."/>
            <person name="Lundby C."/>
            <person name="Olsen J.V."/>
        </authorList>
    </citation>
    <scope>PHOSPHORYLATION [LARGE SCALE ANALYSIS] AT SER-109</scope>
    <scope>IDENTIFICATION BY MASS SPECTROMETRY [LARGE SCALE ANALYSIS]</scope>
</reference>
<reference key="5">
    <citation type="journal article" date="2017" name="Elife">
        <title>PDE2A2 regulates mitochondria morphology and apoptotic cell death via local modulation of cAMP/PKA signalling.</title>
        <authorList>
            <person name="Monterisi S."/>
            <person name="Lobo M.J."/>
            <person name="Livie C."/>
            <person name="Castle J.C."/>
            <person name="Weinberger M."/>
            <person name="Baillie G."/>
            <person name="Surdo N.C."/>
            <person name="Musheshe N."/>
            <person name="Stangherlin A."/>
            <person name="Gottlieb E."/>
            <person name="Maizels R."/>
            <person name="Bortolozzi M."/>
            <person name="Micaroni M."/>
            <person name="Zaccolo M."/>
        </authorList>
    </citation>
    <scope>FUNCTION (ISOFORM PDE2A2)</scope>
    <scope>SUBCELLULAR LOCATION (ISOFORM PDE2A2)</scope>
    <scope>ACTIVITY REGULATION</scope>
</reference>
<sequence length="928" mass="104664">MVLVLHHILIAVVQFLRRGQQVFLKPDEPPPQPCADSLQDALLSLGAVIDIAGLRQAAKDALSAVLPKVETVYTYLVDGESRLVCEDPPHELPQEGKIREAVISRKRLSCDGLGPSDLLGKPLARLVAPLAPDTQVLVIPLLDKETGTVAAVILVHCGQLSDSEEQSLQVVEKHALVALQRVQALQQRRPEAVQNTSADPSEDQKDEKGYTAHDRKILQLCGELYDLDATSLQLKVLRYLQQETQATHCCLLLVSEDNLQLSCKVIGEKVLGEEVSFPLTMGRLGQVVEDKQCIQLKDLTSDDVQQLQNMLGCELRAMLCVPVISRATDQVVALACAFNKLGGDFFTDEDERAIQHCFHYTGTVLTSTLAFQKEQKLKCECQALLQVAKNLFTHLDDVSVLLQEIITEARNLSNAEICSVFLLDQNELVAKVFDGGVVDDESYEIRIPADQGIAGHVATTGQILNIPDAYAHPLFYRGVDDSTGFRTRNILCFPIKNENQEVIGVAELVNKINGPWFSKFDEDLATAFSIYCGISIAHSLLYKKVNEAQYRSHLANEMMMYHMKVSDDEYTKLLHDGIQPVAAIDSNFANFTYTPRSLPEDDTSMAILSMLQDMNFINNYKIDCPTLARFCLMVKKGYRDPPYHNWMHAFSVSHFCYLLYKNLELSNYLEDIEIFALFISCMCHDLDHRGTNNSFQVASKSVLAALYSSEGSVMERHHFAQAIAILNTHGCNIFDHFSRKDYQRMLDLMRDIILATDLAHHLRIFKDLQKMAEVGYDRNNKQHHRLLLCLLMTSCDLSDQTKGWKTTRKIAELIYKEFFSQGDLEKAMGNRPMEMMDREKAYIPELQISFMEHIAMPIYKLLQDLFPKAAELYERVASNREHWTKVSHKFTIRGLPSNNSLDFLDEEYEVPDLDVTRAPVNGCCSLEG</sequence>
<name>PDE2A_RAT</name>
<proteinExistence type="evidence at protein level"/>
<comment type="function">
    <text evidence="1">cGMP-activated cyclic nucleotide phosphodiesterase with a dual-specificity for the second messengers cAMP and cGMP, which are key regulators of many important physiological processes. Has a higher efficiency with cGMP compared to cAMP (By similarity). Plays a role in cell growth and migration (By similarity).</text>
</comment>
<comment type="function">
    <molecule>Isoform PDE2A2</molecule>
    <text evidence="3 8">Regulates mitochondrial cAMP levels and respiration (By similarity). Involved in the regulation of mitochondria morphology/dynamics and apoptotic cell death via local modulation of cAMP/PKA signaling in the mitochondrion, including the monitoring of local cAMP levels at the outer mitochondrial membrane and of PKA-dependent phosphorylation of Dnm1l (PubMed:28463107).</text>
</comment>
<comment type="catalytic activity">
    <reaction evidence="1">
        <text>a nucleoside 3',5'-cyclic phosphate + H2O = a nucleoside 5'-phosphate + H(+)</text>
        <dbReference type="Rhea" id="RHEA:14653"/>
        <dbReference type="ChEBI" id="CHEBI:15377"/>
        <dbReference type="ChEBI" id="CHEBI:15378"/>
        <dbReference type="ChEBI" id="CHEBI:57867"/>
        <dbReference type="ChEBI" id="CHEBI:58464"/>
        <dbReference type="EC" id="3.1.4.17"/>
    </reaction>
    <physiologicalReaction direction="left-to-right" evidence="1">
        <dbReference type="Rhea" id="RHEA:14654"/>
    </physiologicalReaction>
</comment>
<comment type="catalytic activity">
    <reaction evidence="1">
        <text>3',5'-cyclic GMP + H2O = GMP + H(+)</text>
        <dbReference type="Rhea" id="RHEA:16957"/>
        <dbReference type="ChEBI" id="CHEBI:15377"/>
        <dbReference type="ChEBI" id="CHEBI:15378"/>
        <dbReference type="ChEBI" id="CHEBI:57746"/>
        <dbReference type="ChEBI" id="CHEBI:58115"/>
    </reaction>
    <physiologicalReaction direction="left-to-right" evidence="1">
        <dbReference type="Rhea" id="RHEA:16958"/>
    </physiologicalReaction>
</comment>
<comment type="catalytic activity">
    <reaction evidence="1">
        <text>3',5'-cyclic AMP + H2O = AMP + H(+)</text>
        <dbReference type="Rhea" id="RHEA:25277"/>
        <dbReference type="ChEBI" id="CHEBI:15377"/>
        <dbReference type="ChEBI" id="CHEBI:15378"/>
        <dbReference type="ChEBI" id="CHEBI:58165"/>
        <dbReference type="ChEBI" id="CHEBI:456215"/>
    </reaction>
    <physiologicalReaction direction="left-to-right" evidence="1">
        <dbReference type="Rhea" id="RHEA:25278"/>
    </physiologicalReaction>
</comment>
<comment type="cofactor">
    <cofactor evidence="1">
        <name>Zn(2+)</name>
        <dbReference type="ChEBI" id="CHEBI:29105"/>
    </cofactor>
    <text evidence="1">Binds 2 divalent metal cations per subunit. Site 1 may preferentially bind zinc ions.</text>
</comment>
<comment type="cofactor">
    <cofactor evidence="1">
        <name>Mg(2+)</name>
        <dbReference type="ChEBI" id="CHEBI:18420"/>
    </cofactor>
    <text evidence="1">Binds 2 divalent metal cations per subunit. Site 2 has a preference for magnesium ions.</text>
</comment>
<comment type="activity regulation">
    <text evidence="1 8">The 3',5'-cyclic-AMP phosphodiesterase activity is stimulated by 3',5'-cyclic GMP (By similarity). Specifically inhibited by Bay 60-7550. When repressed, protected from ionomycin- but not staurosporin-induced cell death.</text>
</comment>
<comment type="subunit">
    <text evidence="1">Homodimer.</text>
</comment>
<comment type="interaction">
    <interactant intactId="EBI-1786062">
        <id>Q01062</id>
    </interactant>
    <interactant intactId="EBI-1786045">
        <id>Q5FWY5</id>
        <label>Aip</label>
    </interactant>
    <organismsDiffer>false</organismsDiffer>
    <experiments>2</experiments>
</comment>
<comment type="subcellular location">
    <molecule>Isoform PDE2A3</molecule>
    <subcellularLocation>
        <location evidence="1">Cell membrane</location>
        <topology evidence="10">Peripheral membrane protein</topology>
    </subcellularLocation>
</comment>
<comment type="subcellular location">
    <molecule>Isoform PDE2A1</molecule>
    <subcellularLocation>
        <location evidence="1">Cytoplasm</location>
    </subcellularLocation>
</comment>
<comment type="subcellular location">
    <molecule>Isoform PDE2A2</molecule>
    <subcellularLocation>
        <location evidence="7">Mitochondrion matrix</location>
    </subcellularLocation>
    <subcellularLocation>
        <location evidence="8">Mitochondrion inner membrane</location>
    </subcellularLocation>
    <subcellularLocation>
        <location evidence="8">Mitochondrion outer membrane</location>
    </subcellularLocation>
</comment>
<comment type="alternative products">
    <event type="alternative splicing"/>
    <isoform>
        <id>Q01062-1</id>
        <name>PDE2A3</name>
        <sequence type="displayed"/>
    </isoform>
    <isoform>
        <id>Q01062-2</id>
        <name>PDE2A1</name>
        <sequence type="not described"/>
    </isoform>
    <isoform>
        <id>Q01062-3</id>
        <name>PDE2A2</name>
        <sequence type="not described"/>
    </isoform>
    <text>Additional isoforms seem to exist. Experimental confirmation may be lacking for some isoforms.</text>
</comment>
<comment type="tissue specificity">
    <text evidence="7">Expressed in brain and liver.</text>
</comment>
<comment type="domain">
    <text evidence="3">The GAF 1 domain functions as a dimerization domain.</text>
</comment>
<comment type="domain">
    <text evidence="3">The GAF 2 domains binds cGMP, which acts as an allosteric activator.</text>
</comment>
<comment type="similarity">
    <text evidence="10">Belongs to the cyclic nucleotide phosphodiesterase family. PDE2 subfamily.</text>
</comment>
<gene>
    <name evidence="11" type="primary">Pde2a</name>
</gene>
<feature type="chain" id="PRO_0000198798" description="cGMP-dependent 3',5'-cyclic phosphodiesterase">
    <location>
        <begin position="1"/>
        <end position="928"/>
    </location>
</feature>
<feature type="domain" description="GAF 1" evidence="4">
    <location>
        <begin position="228"/>
        <end position="365"/>
    </location>
</feature>
<feature type="domain" description="GAF 2" evidence="4">
    <location>
        <begin position="397"/>
        <end position="536"/>
    </location>
</feature>
<feature type="domain" description="PDEase" evidence="5">
    <location>
        <begin position="566"/>
        <end position="890"/>
    </location>
</feature>
<feature type="region of interest" description="Disordered" evidence="6">
    <location>
        <begin position="188"/>
        <end position="210"/>
    </location>
</feature>
<feature type="active site" description="Proton donor" evidence="2">
    <location>
        <position position="644"/>
    </location>
</feature>
<feature type="binding site" evidence="3">
    <location>
        <position position="419"/>
    </location>
    <ligand>
        <name>3',5'-cyclic GMP</name>
        <dbReference type="ChEBI" id="CHEBI:57746"/>
        <note>allosteric activator</note>
    </ligand>
</feature>
<feature type="binding site" evidence="3">
    <location>
        <position position="434"/>
    </location>
    <ligand>
        <name>3',5'-cyclic GMP</name>
        <dbReference type="ChEBI" id="CHEBI:57746"/>
        <note>allosteric activator</note>
    </ligand>
</feature>
<feature type="binding site" evidence="3">
    <location>
        <position position="453"/>
    </location>
    <ligand>
        <name>3',5'-cyclic GMP</name>
        <dbReference type="ChEBI" id="CHEBI:57746"/>
        <note>allosteric activator</note>
    </ligand>
</feature>
<feature type="binding site" evidence="3">
    <location>
        <position position="476"/>
    </location>
    <ligand>
        <name>3',5'-cyclic GMP</name>
        <dbReference type="ChEBI" id="CHEBI:57746"/>
        <note>allosteric activator</note>
    </ligand>
</feature>
<feature type="binding site" evidence="3">
    <location>
        <position position="487"/>
    </location>
    <ligand>
        <name>3',5'-cyclic GMP</name>
        <dbReference type="ChEBI" id="CHEBI:57746"/>
        <note>allosteric activator</note>
    </ligand>
</feature>
<feature type="binding site" evidence="1">
    <location>
        <position position="648"/>
    </location>
    <ligand>
        <name>Zn(2+)</name>
        <dbReference type="ChEBI" id="CHEBI:29105"/>
    </ligand>
</feature>
<feature type="binding site" evidence="1">
    <location>
        <position position="684"/>
    </location>
    <ligand>
        <name>Zn(2+)</name>
        <dbReference type="ChEBI" id="CHEBI:29105"/>
    </ligand>
</feature>
<feature type="binding site" evidence="1">
    <location>
        <position position="685"/>
    </location>
    <ligand>
        <name>Mg(2+)</name>
        <dbReference type="ChEBI" id="CHEBI:18420"/>
    </ligand>
</feature>
<feature type="binding site" evidence="1">
    <location>
        <position position="685"/>
    </location>
    <ligand>
        <name>Zn(2+)</name>
        <dbReference type="ChEBI" id="CHEBI:29105"/>
    </ligand>
</feature>
<feature type="binding site" evidence="1">
    <location>
        <position position="796"/>
    </location>
    <ligand>
        <name>Zn(2+)</name>
        <dbReference type="ChEBI" id="CHEBI:29105"/>
    </ligand>
</feature>
<feature type="modified residue" description="Phosphoserine" evidence="12">
    <location>
        <position position="109"/>
    </location>
</feature>
<feature type="sequence conflict" description="In Ref. 2; AAA40922." evidence="10" ref="2">
    <original>W</original>
    <variation>R</variation>
    <location>
        <position position="646"/>
    </location>
</feature>
<feature type="sequence conflict" description="In Ref. 2; AAA40922." evidence="10" ref="2">
    <original>L</original>
    <variation>M</variation>
    <location>
        <position position="758"/>
    </location>
</feature>